<sequence>MNKNCDYCGLTIYSETYHKCVESSVKINDETKIVNYKIITIDELGILAGKNDREAQDEIVYRYLNQDAINLSQKNIKPINWENIIERAIDDQYFTYFLLFFAFDHDEYHVIFDVLFDVLFENVKLAAKTGDSMAQYNLGQMYYRGISTKKNIQKAIKWITKSADQNNKYGLINLARFYEYGDGVLLDIDKATQLLEQASCQNFSKAQFYLGRIYMYKDPPDYKLAFKYYQQAANQNHSSAQYFIAVFYKTGKCVAQDYKKAVHWLTLAASQGLNSAKIKLAEMYMKGIDVEQNYHKAFELLNSSIYDDGTNNYYDEVAMTELACMYKRGLGIEKNISKAIYLHIKSRNTKNIFKIFEINTITFINPINVDCENNNLSDIDQLESKIIYKLQFLMIKLKYEWSNIYHDDISNSLQEIENSFTRLIKLRIQLNNSSAMINCLSFKKNTSYKFDVFNTKNAYVNYYVYDDISYINIGLNNIKLVNNFQKNLDKFMFCNIFLDLELALENKHKEKIDDLINAVKNDDRSHQLNIVKDLDNIKFVLSQTKKISSKLIGYVNILMNDLKSNTHIRNQQFQLEYANIFGYD</sequence>
<proteinExistence type="predicted"/>
<accession>Q5UP92</accession>
<protein>
    <recommendedName>
        <fullName>Putative sel1-like repeat-containing protein L18</fullName>
    </recommendedName>
</protein>
<keyword id="KW-1185">Reference proteome</keyword>
<keyword id="KW-0677">Repeat</keyword>
<feature type="chain" id="PRO_0000071180" description="Putative sel1-like repeat-containing protein L18">
    <location>
        <begin position="1"/>
        <end position="584"/>
    </location>
</feature>
<feature type="repeat" description="Sel1-like 1">
    <location>
        <begin position="132"/>
        <end position="167"/>
    </location>
</feature>
<feature type="repeat" description="Sel1-like 2">
    <location>
        <begin position="168"/>
        <end position="203"/>
    </location>
</feature>
<feature type="repeat" description="Sel1-like 3">
    <location>
        <begin position="204"/>
        <end position="237"/>
    </location>
</feature>
<feature type="repeat" description="Sel1-like 4">
    <location>
        <begin position="238"/>
        <end position="273"/>
    </location>
</feature>
<feature type="repeat" description="Sel1-like 5">
    <location>
        <begin position="274"/>
        <end position="309"/>
    </location>
</feature>
<feature type="repeat" description="Sel1-like 6">
    <location>
        <begin position="316"/>
        <end position="351"/>
    </location>
</feature>
<dbReference type="EMBL" id="AY653733">
    <property type="protein sequence ID" value="AAV50293.1"/>
    <property type="molecule type" value="Genomic_DNA"/>
</dbReference>
<dbReference type="SMR" id="Q5UP92"/>
<dbReference type="KEGG" id="vg:9924595"/>
<dbReference type="OrthoDB" id="29558at10239"/>
<dbReference type="Proteomes" id="UP000001134">
    <property type="component" value="Genome"/>
</dbReference>
<dbReference type="Gene3D" id="1.25.40.10">
    <property type="entry name" value="Tetratricopeptide repeat domain"/>
    <property type="match status" value="2"/>
</dbReference>
<dbReference type="InterPro" id="IPR052945">
    <property type="entry name" value="Mitotic_Regulator"/>
</dbReference>
<dbReference type="InterPro" id="IPR006597">
    <property type="entry name" value="Sel1-like"/>
</dbReference>
<dbReference type="InterPro" id="IPR011990">
    <property type="entry name" value="TPR-like_helical_dom_sf"/>
</dbReference>
<dbReference type="PANTHER" id="PTHR43628">
    <property type="entry name" value="ACTIVATOR OF C KINASE PROTEIN 1-RELATED"/>
    <property type="match status" value="1"/>
</dbReference>
<dbReference type="PANTHER" id="PTHR43628:SF1">
    <property type="entry name" value="CHITIN SYNTHASE REGULATORY FACTOR 2-RELATED"/>
    <property type="match status" value="1"/>
</dbReference>
<dbReference type="Pfam" id="PF08238">
    <property type="entry name" value="Sel1"/>
    <property type="match status" value="6"/>
</dbReference>
<dbReference type="SMART" id="SM00671">
    <property type="entry name" value="SEL1"/>
    <property type="match status" value="6"/>
</dbReference>
<dbReference type="SUPFAM" id="SSF81901">
    <property type="entry name" value="HCP-like"/>
    <property type="match status" value="2"/>
</dbReference>
<reference key="1">
    <citation type="journal article" date="2004" name="Science">
        <title>The 1.2-megabase genome sequence of Mimivirus.</title>
        <authorList>
            <person name="Raoult D."/>
            <person name="Audic S."/>
            <person name="Robert C."/>
            <person name="Abergel C."/>
            <person name="Renesto P."/>
            <person name="Ogata H."/>
            <person name="La Scola B."/>
            <person name="Susan M."/>
            <person name="Claverie J.-M."/>
        </authorList>
    </citation>
    <scope>NUCLEOTIDE SEQUENCE [LARGE SCALE GENOMIC DNA]</scope>
    <source>
        <strain>Rowbotham-Bradford</strain>
    </source>
</reference>
<organismHost>
    <name type="scientific">Acanthamoeba polyphaga</name>
    <name type="common">Amoeba</name>
    <dbReference type="NCBI Taxonomy" id="5757"/>
</organismHost>
<name>YL018_MIMIV</name>
<gene>
    <name type="ordered locus">MIMI_L18</name>
</gene>
<organism>
    <name type="scientific">Acanthamoeba polyphaga mimivirus</name>
    <name type="common">APMV</name>
    <dbReference type="NCBI Taxonomy" id="212035"/>
    <lineage>
        <taxon>Viruses</taxon>
        <taxon>Varidnaviria</taxon>
        <taxon>Bamfordvirae</taxon>
        <taxon>Nucleocytoviricota</taxon>
        <taxon>Megaviricetes</taxon>
        <taxon>Imitervirales</taxon>
        <taxon>Mimiviridae</taxon>
        <taxon>Megamimivirinae</taxon>
        <taxon>Mimivirus</taxon>
        <taxon>Mimivirus bradfordmassiliense</taxon>
    </lineage>
</organism>